<feature type="chain" id="PRO_1000126247" description="Transaldolase">
    <location>
        <begin position="1"/>
        <end position="334"/>
    </location>
</feature>
<feature type="active site" description="Schiff-base intermediate with substrate" evidence="2">
    <location>
        <position position="136"/>
    </location>
</feature>
<dbReference type="EC" id="2.2.1.2" evidence="2"/>
<dbReference type="EMBL" id="CP001037">
    <property type="protein sequence ID" value="ACC78831.1"/>
    <property type="molecule type" value="Genomic_DNA"/>
</dbReference>
<dbReference type="RefSeq" id="WP_012406860.1">
    <property type="nucleotide sequence ID" value="NC_010628.1"/>
</dbReference>
<dbReference type="SMR" id="B2J2D9"/>
<dbReference type="STRING" id="63737.Npun_R0029"/>
<dbReference type="EnsemblBacteria" id="ACC78831">
    <property type="protein sequence ID" value="ACC78831"/>
    <property type="gene ID" value="Npun_R0029"/>
</dbReference>
<dbReference type="KEGG" id="npu:Npun_R0029"/>
<dbReference type="eggNOG" id="COG0176">
    <property type="taxonomic scope" value="Bacteria"/>
</dbReference>
<dbReference type="HOGENOM" id="CLU_047470_0_1_3"/>
<dbReference type="OrthoDB" id="9807051at2"/>
<dbReference type="PhylomeDB" id="B2J2D9"/>
<dbReference type="UniPathway" id="UPA00115">
    <property type="reaction ID" value="UER00414"/>
</dbReference>
<dbReference type="Proteomes" id="UP000001191">
    <property type="component" value="Chromosome"/>
</dbReference>
<dbReference type="GO" id="GO:0005737">
    <property type="term" value="C:cytoplasm"/>
    <property type="evidence" value="ECO:0007669"/>
    <property type="project" value="UniProtKB-SubCell"/>
</dbReference>
<dbReference type="GO" id="GO:0004801">
    <property type="term" value="F:transaldolase activity"/>
    <property type="evidence" value="ECO:0000250"/>
    <property type="project" value="UniProtKB"/>
</dbReference>
<dbReference type="GO" id="GO:0005975">
    <property type="term" value="P:carbohydrate metabolic process"/>
    <property type="evidence" value="ECO:0007669"/>
    <property type="project" value="InterPro"/>
</dbReference>
<dbReference type="GO" id="GO:0006098">
    <property type="term" value="P:pentose-phosphate shunt"/>
    <property type="evidence" value="ECO:0007669"/>
    <property type="project" value="UniProtKB-UniRule"/>
</dbReference>
<dbReference type="CDD" id="cd00957">
    <property type="entry name" value="Transaldolase_TalAB"/>
    <property type="match status" value="1"/>
</dbReference>
<dbReference type="FunFam" id="3.20.20.70:FF:000002">
    <property type="entry name" value="Transaldolase"/>
    <property type="match status" value="1"/>
</dbReference>
<dbReference type="Gene3D" id="3.20.20.70">
    <property type="entry name" value="Aldolase class I"/>
    <property type="match status" value="1"/>
</dbReference>
<dbReference type="HAMAP" id="MF_00492">
    <property type="entry name" value="Transaldolase_1"/>
    <property type="match status" value="1"/>
</dbReference>
<dbReference type="InterPro" id="IPR013785">
    <property type="entry name" value="Aldolase_TIM"/>
</dbReference>
<dbReference type="InterPro" id="IPR001585">
    <property type="entry name" value="TAL/FSA"/>
</dbReference>
<dbReference type="InterPro" id="IPR004730">
    <property type="entry name" value="Transaldolase_1"/>
</dbReference>
<dbReference type="InterPro" id="IPR018225">
    <property type="entry name" value="Transaldolase_AS"/>
</dbReference>
<dbReference type="NCBIfam" id="NF008965">
    <property type="entry name" value="PRK12309.1"/>
    <property type="match status" value="1"/>
</dbReference>
<dbReference type="NCBIfam" id="TIGR00874">
    <property type="entry name" value="talAB"/>
    <property type="match status" value="1"/>
</dbReference>
<dbReference type="PANTHER" id="PTHR10683">
    <property type="entry name" value="TRANSALDOLASE"/>
    <property type="match status" value="1"/>
</dbReference>
<dbReference type="PANTHER" id="PTHR10683:SF18">
    <property type="entry name" value="TRANSALDOLASE"/>
    <property type="match status" value="1"/>
</dbReference>
<dbReference type="Pfam" id="PF00923">
    <property type="entry name" value="TAL_FSA"/>
    <property type="match status" value="1"/>
</dbReference>
<dbReference type="SUPFAM" id="SSF51569">
    <property type="entry name" value="Aldolase"/>
    <property type="match status" value="1"/>
</dbReference>
<dbReference type="PROSITE" id="PS01054">
    <property type="entry name" value="TRANSALDOLASE_1"/>
    <property type="match status" value="1"/>
</dbReference>
<dbReference type="PROSITE" id="PS00958">
    <property type="entry name" value="TRANSALDOLASE_2"/>
    <property type="match status" value="1"/>
</dbReference>
<name>TAL_NOSP7</name>
<keyword id="KW-0963">Cytoplasm</keyword>
<keyword id="KW-0570">Pentose shunt</keyword>
<keyword id="KW-1185">Reference proteome</keyword>
<keyword id="KW-0704">Schiff base</keyword>
<keyword id="KW-0808">Transferase</keyword>
<protein>
    <recommendedName>
        <fullName evidence="2">Transaldolase</fullName>
        <ecNumber evidence="2">2.2.1.2</ecNumber>
    </recommendedName>
</protein>
<comment type="function">
    <text evidence="2">Transaldolase is important for the balance of metabolites in the pentose-phosphate pathway.</text>
</comment>
<comment type="catalytic activity">
    <reaction evidence="2">
        <text>D-sedoheptulose 7-phosphate + D-glyceraldehyde 3-phosphate = D-erythrose 4-phosphate + beta-D-fructose 6-phosphate</text>
        <dbReference type="Rhea" id="RHEA:17053"/>
        <dbReference type="ChEBI" id="CHEBI:16897"/>
        <dbReference type="ChEBI" id="CHEBI:57483"/>
        <dbReference type="ChEBI" id="CHEBI:57634"/>
        <dbReference type="ChEBI" id="CHEBI:59776"/>
        <dbReference type="EC" id="2.2.1.2"/>
    </reaction>
</comment>
<comment type="pathway">
    <text evidence="2">Carbohydrate degradation; pentose phosphate pathway; D-glyceraldehyde 3-phosphate and beta-D-fructose 6-phosphate from D-ribose 5-phosphate and D-xylulose 5-phosphate (non-oxidative stage): step 2/3.</text>
</comment>
<comment type="subunit">
    <text evidence="1">Homodimer.</text>
</comment>
<comment type="subcellular location">
    <subcellularLocation>
        <location evidence="2">Cytoplasm</location>
    </subcellularLocation>
</comment>
<comment type="similarity">
    <text evidence="2">Belongs to the transaldolase family. Type 1 subfamily.</text>
</comment>
<proteinExistence type="inferred from homology"/>
<reference key="1">
    <citation type="journal article" date="2013" name="Plant Physiol.">
        <title>A Nostoc punctiforme Sugar Transporter Necessary to Establish a Cyanobacterium-Plant Symbiosis.</title>
        <authorList>
            <person name="Ekman M."/>
            <person name="Picossi S."/>
            <person name="Campbell E.L."/>
            <person name="Meeks J.C."/>
            <person name="Flores E."/>
        </authorList>
    </citation>
    <scope>NUCLEOTIDE SEQUENCE [LARGE SCALE GENOMIC DNA]</scope>
    <source>
        <strain>ATCC 29133 / PCC 73102</strain>
    </source>
</reference>
<evidence type="ECO:0000250" key="1"/>
<evidence type="ECO:0000255" key="2">
    <source>
        <dbReference type="HAMAP-Rule" id="MF_00492"/>
    </source>
</evidence>
<sequence>MSKNLLEQLREVTVVVADTGDIQAIEKFKPQDATTNPSLITAAAQMPEYQGIVDQTLLQAKKDAGDGATQAQIVSLAFDRLAVAFGLKILQIIPGRVSTEVDARLSYDTEATLTKARDLIAQYKAAGIGRDRVLIKIASTWEGIRAAEILEKEGIHCNLTLLFGLHQAIACAEAGVTLISPFVGRILDWYKKDTGRDSYPATEDPGVLSVTKIYNYYKKFGYKTEVMGASFRNLGEITELAGSDLLTISPSLLAELQSTVAELPRKLDPAKAASLSIEKISIDKASYDKMHAADRMATDKLDEGIKGFTKALEDLEKLLADRLVRLEGEVVASH</sequence>
<gene>
    <name evidence="2" type="primary">tal</name>
    <name type="ordered locus">Npun_R0029</name>
</gene>
<organism>
    <name type="scientific">Nostoc punctiforme (strain ATCC 29133 / PCC 73102)</name>
    <dbReference type="NCBI Taxonomy" id="63737"/>
    <lineage>
        <taxon>Bacteria</taxon>
        <taxon>Bacillati</taxon>
        <taxon>Cyanobacteriota</taxon>
        <taxon>Cyanophyceae</taxon>
        <taxon>Nostocales</taxon>
        <taxon>Nostocaceae</taxon>
        <taxon>Nostoc</taxon>
    </lineage>
</organism>
<accession>B2J2D9</accession>